<evidence type="ECO:0000255" key="1">
    <source>
        <dbReference type="HAMAP-Rule" id="MF_01659"/>
    </source>
</evidence>
<sequence>MNPSTALARVLVDELARLGLTEAVIAPGSRSTPLALALVADTRIRTHVRIDERSASFLAVGLARASRRPVALVCTSGTAAANFHPAVLEADQSGVSLIVLTADRPPELRGTGANQTVNQIGLYGSAVRFFAEVGVPEREAGMVAYWRSLVCRAWAAAQANKPGPVHLNLAFREPLVPEPGGQPWPEPVTGRPDGKPWITVDLQRNEPEPVELPWVERGVIVCGDGDYDPIPLLALSAQTGWPLLAEPTSNARRAEALSSYRQLLAVPEFVAAHEPELVVSVGRPGLSRQLLAYLRRAPRHVVVGDPVAFADPVRTATDVVGAVTAPPSATPDTAWAASWAAAEAAARAAADRLLDSDETLSELRLARDLAAHLPAGSLLFAGASMPIRDLDAVMRPRCGLRLIGNRGVSGIDGTVSTAVGAALAHQADGGGEAFALLGDLALLHDQNGLLLGPDEPRPNLTIVVVNNDGGGIFSELEQAGHPDFERVFGTPHGVAVEQVAATAGLPYTRVEWATDLPKALIGDGLRLVEVRTDRAASARLRRALQEAVAAAVR</sequence>
<gene>
    <name evidence="1" type="primary">menD</name>
    <name type="ordered locus">Tfu_1411</name>
</gene>
<comment type="function">
    <text evidence="1">Catalyzes the thiamine diphosphate-dependent decarboxylation of 2-oxoglutarate and the subsequent addition of the resulting succinic semialdehyde-thiamine pyrophosphate anion to isochorismate to yield 2-succinyl-5-enolpyruvyl-6-hydroxy-3-cyclohexene-1-carboxylate (SEPHCHC).</text>
</comment>
<comment type="catalytic activity">
    <reaction evidence="1">
        <text>isochorismate + 2-oxoglutarate + H(+) = 5-enolpyruvoyl-6-hydroxy-2-succinyl-cyclohex-3-ene-1-carboxylate + CO2</text>
        <dbReference type="Rhea" id="RHEA:25593"/>
        <dbReference type="ChEBI" id="CHEBI:15378"/>
        <dbReference type="ChEBI" id="CHEBI:16526"/>
        <dbReference type="ChEBI" id="CHEBI:16810"/>
        <dbReference type="ChEBI" id="CHEBI:29780"/>
        <dbReference type="ChEBI" id="CHEBI:58818"/>
        <dbReference type="EC" id="2.2.1.9"/>
    </reaction>
</comment>
<comment type="cofactor">
    <cofactor evidence="1">
        <name>Mg(2+)</name>
        <dbReference type="ChEBI" id="CHEBI:18420"/>
    </cofactor>
    <cofactor evidence="1">
        <name>Mn(2+)</name>
        <dbReference type="ChEBI" id="CHEBI:29035"/>
    </cofactor>
</comment>
<comment type="cofactor">
    <cofactor evidence="1">
        <name>thiamine diphosphate</name>
        <dbReference type="ChEBI" id="CHEBI:58937"/>
    </cofactor>
    <text evidence="1">Binds 1 thiamine pyrophosphate per subunit.</text>
</comment>
<comment type="pathway">
    <text evidence="1">Quinol/quinone metabolism; 1,4-dihydroxy-2-naphthoate biosynthesis; 1,4-dihydroxy-2-naphthoate from chorismate: step 2/7.</text>
</comment>
<comment type="pathway">
    <text evidence="1">Quinol/quinone metabolism; menaquinone biosynthesis.</text>
</comment>
<comment type="subunit">
    <text evidence="1">Homodimer.</text>
</comment>
<comment type="similarity">
    <text evidence="1">Belongs to the TPP enzyme family. MenD subfamily.</text>
</comment>
<dbReference type="EC" id="2.2.1.9" evidence="1"/>
<dbReference type="EMBL" id="CP000088">
    <property type="protein sequence ID" value="AAZ55449.1"/>
    <property type="molecule type" value="Genomic_DNA"/>
</dbReference>
<dbReference type="RefSeq" id="WP_011291845.1">
    <property type="nucleotide sequence ID" value="NC_007333.1"/>
</dbReference>
<dbReference type="SMR" id="Q47Q20"/>
<dbReference type="STRING" id="269800.Tfu_1411"/>
<dbReference type="KEGG" id="tfu:Tfu_1411"/>
<dbReference type="eggNOG" id="COG1165">
    <property type="taxonomic scope" value="Bacteria"/>
</dbReference>
<dbReference type="HOGENOM" id="CLU_006051_3_0_11"/>
<dbReference type="OrthoDB" id="9791859at2"/>
<dbReference type="UniPathway" id="UPA00079"/>
<dbReference type="UniPathway" id="UPA01057">
    <property type="reaction ID" value="UER00164"/>
</dbReference>
<dbReference type="GO" id="GO:0070204">
    <property type="term" value="F:2-succinyl-5-enolpyruvyl-6-hydroxy-3-cyclohexene-1-carboxylic-acid synthase activity"/>
    <property type="evidence" value="ECO:0007669"/>
    <property type="project" value="UniProtKB-UniRule"/>
</dbReference>
<dbReference type="GO" id="GO:0000287">
    <property type="term" value="F:magnesium ion binding"/>
    <property type="evidence" value="ECO:0007669"/>
    <property type="project" value="UniProtKB-UniRule"/>
</dbReference>
<dbReference type="GO" id="GO:0030145">
    <property type="term" value="F:manganese ion binding"/>
    <property type="evidence" value="ECO:0007669"/>
    <property type="project" value="UniProtKB-UniRule"/>
</dbReference>
<dbReference type="GO" id="GO:0030976">
    <property type="term" value="F:thiamine pyrophosphate binding"/>
    <property type="evidence" value="ECO:0007669"/>
    <property type="project" value="UniProtKB-UniRule"/>
</dbReference>
<dbReference type="GO" id="GO:0009234">
    <property type="term" value="P:menaquinone biosynthetic process"/>
    <property type="evidence" value="ECO:0007669"/>
    <property type="project" value="UniProtKB-UniRule"/>
</dbReference>
<dbReference type="CDD" id="cd07037">
    <property type="entry name" value="TPP_PYR_MenD"/>
    <property type="match status" value="1"/>
</dbReference>
<dbReference type="CDD" id="cd02009">
    <property type="entry name" value="TPP_SHCHC_synthase"/>
    <property type="match status" value="1"/>
</dbReference>
<dbReference type="Gene3D" id="3.40.50.970">
    <property type="match status" value="2"/>
</dbReference>
<dbReference type="Gene3D" id="3.40.50.1220">
    <property type="entry name" value="TPP-binding domain"/>
    <property type="match status" value="1"/>
</dbReference>
<dbReference type="HAMAP" id="MF_01659">
    <property type="entry name" value="MenD"/>
    <property type="match status" value="1"/>
</dbReference>
<dbReference type="InterPro" id="IPR004433">
    <property type="entry name" value="MenaQ_synth_MenD"/>
</dbReference>
<dbReference type="InterPro" id="IPR032264">
    <property type="entry name" value="MenD_middle"/>
</dbReference>
<dbReference type="InterPro" id="IPR029061">
    <property type="entry name" value="THDP-binding"/>
</dbReference>
<dbReference type="InterPro" id="IPR012001">
    <property type="entry name" value="Thiamin_PyroP_enz_TPP-bd_dom"/>
</dbReference>
<dbReference type="NCBIfam" id="TIGR00173">
    <property type="entry name" value="menD"/>
    <property type="match status" value="1"/>
</dbReference>
<dbReference type="PANTHER" id="PTHR42916">
    <property type="entry name" value="2-SUCCINYL-5-ENOLPYRUVYL-6-HYDROXY-3-CYCLOHEXENE-1-CARBOXYLATE SYNTHASE"/>
    <property type="match status" value="1"/>
</dbReference>
<dbReference type="PANTHER" id="PTHR42916:SF1">
    <property type="entry name" value="PROTEIN PHYLLO, CHLOROPLASTIC"/>
    <property type="match status" value="1"/>
</dbReference>
<dbReference type="Pfam" id="PF16582">
    <property type="entry name" value="TPP_enzyme_M_2"/>
    <property type="match status" value="1"/>
</dbReference>
<dbReference type="Pfam" id="PF02776">
    <property type="entry name" value="TPP_enzyme_N"/>
    <property type="match status" value="1"/>
</dbReference>
<dbReference type="PIRSF" id="PIRSF004983">
    <property type="entry name" value="MenD"/>
    <property type="match status" value="1"/>
</dbReference>
<dbReference type="SUPFAM" id="SSF52518">
    <property type="entry name" value="Thiamin diphosphate-binding fold (THDP-binding)"/>
    <property type="match status" value="2"/>
</dbReference>
<keyword id="KW-0460">Magnesium</keyword>
<keyword id="KW-0464">Manganese</keyword>
<keyword id="KW-0474">Menaquinone biosynthesis</keyword>
<keyword id="KW-0479">Metal-binding</keyword>
<keyword id="KW-0786">Thiamine pyrophosphate</keyword>
<keyword id="KW-0808">Transferase</keyword>
<feature type="chain" id="PRO_0000341880" description="2-succinyl-5-enolpyruvyl-6-hydroxy-3-cyclohexene-1-carboxylate synthase">
    <location>
        <begin position="1"/>
        <end position="553"/>
    </location>
</feature>
<reference key="1">
    <citation type="journal article" date="2007" name="J. Bacteriol.">
        <title>Genome sequence and analysis of the soil cellulolytic actinomycete Thermobifida fusca YX.</title>
        <authorList>
            <person name="Lykidis A."/>
            <person name="Mavromatis K."/>
            <person name="Ivanova N."/>
            <person name="Anderson I."/>
            <person name="Land M."/>
            <person name="DiBartolo G."/>
            <person name="Martinez M."/>
            <person name="Lapidus A."/>
            <person name="Lucas S."/>
            <person name="Copeland A."/>
            <person name="Richardson P."/>
            <person name="Wilson D.B."/>
            <person name="Kyrpides N."/>
        </authorList>
    </citation>
    <scope>NUCLEOTIDE SEQUENCE [LARGE SCALE GENOMIC DNA]</scope>
    <source>
        <strain>YX</strain>
    </source>
</reference>
<accession>Q47Q20</accession>
<proteinExistence type="inferred from homology"/>
<name>MEND_THEFY</name>
<organism>
    <name type="scientific">Thermobifida fusca (strain YX)</name>
    <dbReference type="NCBI Taxonomy" id="269800"/>
    <lineage>
        <taxon>Bacteria</taxon>
        <taxon>Bacillati</taxon>
        <taxon>Actinomycetota</taxon>
        <taxon>Actinomycetes</taxon>
        <taxon>Streptosporangiales</taxon>
        <taxon>Nocardiopsidaceae</taxon>
        <taxon>Thermobifida</taxon>
    </lineage>
</organism>
<protein>
    <recommendedName>
        <fullName evidence="1">2-succinyl-5-enolpyruvyl-6-hydroxy-3-cyclohexene-1-carboxylate synthase</fullName>
        <shortName evidence="1">SEPHCHC synthase</shortName>
        <ecNumber evidence="1">2.2.1.9</ecNumber>
    </recommendedName>
    <alternativeName>
        <fullName evidence="1">Menaquinone biosynthesis protein MenD</fullName>
    </alternativeName>
</protein>